<evidence type="ECO:0000256" key="1">
    <source>
        <dbReference type="SAM" id="MobiDB-lite"/>
    </source>
</evidence>
<evidence type="ECO:0000269" key="2">
    <source>
    </source>
</evidence>
<evidence type="ECO:0000305" key="3"/>
<evidence type="ECO:0007744" key="4">
    <source>
    </source>
</evidence>
<accession>Q64327</accession>
<accession>Q793G4</accession>
<organism>
    <name type="scientific">Mus musculus</name>
    <name type="common">Mouse</name>
    <dbReference type="NCBI Taxonomy" id="10090"/>
    <lineage>
        <taxon>Eukaryota</taxon>
        <taxon>Metazoa</taxon>
        <taxon>Chordata</taxon>
        <taxon>Craniata</taxon>
        <taxon>Vertebrata</taxon>
        <taxon>Euteleostomi</taxon>
        <taxon>Mammalia</taxon>
        <taxon>Eutheria</taxon>
        <taxon>Euarchontoglires</taxon>
        <taxon>Glires</taxon>
        <taxon>Rodentia</taxon>
        <taxon>Myomorpha</taxon>
        <taxon>Muroidea</taxon>
        <taxon>Muridae</taxon>
        <taxon>Murinae</taxon>
        <taxon>Mus</taxon>
        <taxon>Mus</taxon>
    </lineage>
</organism>
<comment type="function">
    <text>May play an important role in spermatogenesis and/or testis development.</text>
</comment>
<comment type="tissue specificity">
    <text evidence="2">Highly expressed in testis. Transcripts can be found in primary and secondary spermatocytes, and spermatids, but the protein itself is only detected in spermatids. No expression in Leydig cells, spermatogonia, or sperm. Very weak expression in the heart, kidney, spleen, thymus and ovary.</text>
</comment>
<comment type="developmental stage">
    <text>Expressed as early as day 6 postpartum (dpp), with higher expression in the adult testis.</text>
</comment>
<comment type="caution">
    <text evidence="3">Was originally thought to be the H-Y antigen.</text>
</comment>
<comment type="caution">
    <text evidence="3">It is uncertain whether Met-1 or Met-11 is the initiator.</text>
</comment>
<feature type="chain" id="PRO_0000096342" description="Male-enhanced antigen 1">
    <location>
        <begin position="1"/>
        <end position="174"/>
    </location>
</feature>
<feature type="region of interest" description="Disordered" evidence="1">
    <location>
        <begin position="1"/>
        <end position="83"/>
    </location>
</feature>
<feature type="region of interest" description="Disordered" evidence="1">
    <location>
        <begin position="95"/>
        <end position="123"/>
    </location>
</feature>
<feature type="compositionally biased region" description="Acidic residues" evidence="1">
    <location>
        <begin position="38"/>
        <end position="48"/>
    </location>
</feature>
<feature type="compositionally biased region" description="Acidic residues" evidence="1">
    <location>
        <begin position="65"/>
        <end position="82"/>
    </location>
</feature>
<feature type="compositionally biased region" description="Acidic residues" evidence="1">
    <location>
        <begin position="101"/>
        <end position="110"/>
    </location>
</feature>
<feature type="modified residue" description="Phosphoserine" evidence="4">
    <location>
        <position position="103"/>
    </location>
</feature>
<protein>
    <recommendedName>
        <fullName>Male-enhanced antigen 1</fullName>
        <shortName>MEA-1</shortName>
    </recommendedName>
</protein>
<sequence length="174" mass="18584">MAAVVLGGDTMGPERIFPNQTEDLGPHQGPTEGTGDWSSEEPEEEQEETGAGPAGYSYQPLNQDPEQEEVELAPVGEGEDGAADIQDRIQALGLHLPDPPLESEDEDEEGAAALSSHSSIPMDPEHVELVKRTMAGVSLPAPGVPAWAREISDAQWEDVVQKALQARQASPAWK</sequence>
<keyword id="KW-0217">Developmental protein</keyword>
<keyword id="KW-0221">Differentiation</keyword>
<keyword id="KW-0597">Phosphoprotein</keyword>
<keyword id="KW-1185">Reference proteome</keyword>
<keyword id="KW-0744">Spermatogenesis</keyword>
<name>MEA1_MOUSE</name>
<proteinExistence type="evidence at protein level"/>
<gene>
    <name type="primary">Mea1</name>
    <name type="synonym">Mea</name>
</gene>
<reference key="1">
    <citation type="journal article" date="1989" name="Proc. Natl. Acad. Sci. U.S.A.">
        <title>Male-enhanced antigen gene is phylogenetically conserved and expressed at late stages of spermatogenesis.</title>
        <authorList>
            <person name="Lau Y.-F.C."/>
            <person name="Chan K."/>
            <person name="Sparkes R.S."/>
        </authorList>
    </citation>
    <scope>NUCLEOTIDE SEQUENCE [MRNA]</scope>
</reference>
<reference key="2">
    <citation type="journal article" date="1993" name="Biochim. Biophys. Acta">
        <title>Cloning and sequence analysis of cDNA encoding the bovine testis-derived male-enhanced antigen (Mea).</title>
        <authorList>
            <person name="Kondo M."/>
            <person name="Sato S."/>
            <person name="Sutou S."/>
        </authorList>
    </citation>
    <scope>NUCLEOTIDE SEQUENCE [MRNA]</scope>
    <source>
        <tissue>Testis</tissue>
    </source>
</reference>
<reference key="3">
    <citation type="journal article" date="2002" name="Biol. Reprod.">
        <title>Male-enhanced antigen-1 gene flanked by two overlapping genes is expressed in late spermatogenesis.</title>
        <authorList>
            <person name="Ohinata Y."/>
            <person name="Sutou S."/>
            <person name="Kondo M."/>
            <person name="Takahashi T."/>
            <person name="Mitsui Y."/>
        </authorList>
    </citation>
    <scope>NUCLEOTIDE SEQUENCE [GENOMIC DNA]</scope>
    <scope>TISSUE SPECIFICITY</scope>
    <source>
        <strain>129/SvJ</strain>
    </source>
</reference>
<reference key="4">
    <citation type="journal article" date="2005" name="Science">
        <title>The transcriptional landscape of the mammalian genome.</title>
        <authorList>
            <person name="Carninci P."/>
            <person name="Kasukawa T."/>
            <person name="Katayama S."/>
            <person name="Gough J."/>
            <person name="Frith M.C."/>
            <person name="Maeda N."/>
            <person name="Oyama R."/>
            <person name="Ravasi T."/>
            <person name="Lenhard B."/>
            <person name="Wells C."/>
            <person name="Kodzius R."/>
            <person name="Shimokawa K."/>
            <person name="Bajic V.B."/>
            <person name="Brenner S.E."/>
            <person name="Batalov S."/>
            <person name="Forrest A.R."/>
            <person name="Zavolan M."/>
            <person name="Davis M.J."/>
            <person name="Wilming L.G."/>
            <person name="Aidinis V."/>
            <person name="Allen J.E."/>
            <person name="Ambesi-Impiombato A."/>
            <person name="Apweiler R."/>
            <person name="Aturaliya R.N."/>
            <person name="Bailey T.L."/>
            <person name="Bansal M."/>
            <person name="Baxter L."/>
            <person name="Beisel K.W."/>
            <person name="Bersano T."/>
            <person name="Bono H."/>
            <person name="Chalk A.M."/>
            <person name="Chiu K.P."/>
            <person name="Choudhary V."/>
            <person name="Christoffels A."/>
            <person name="Clutterbuck D.R."/>
            <person name="Crowe M.L."/>
            <person name="Dalla E."/>
            <person name="Dalrymple B.P."/>
            <person name="de Bono B."/>
            <person name="Della Gatta G."/>
            <person name="di Bernardo D."/>
            <person name="Down T."/>
            <person name="Engstrom P."/>
            <person name="Fagiolini M."/>
            <person name="Faulkner G."/>
            <person name="Fletcher C.F."/>
            <person name="Fukushima T."/>
            <person name="Furuno M."/>
            <person name="Futaki S."/>
            <person name="Gariboldi M."/>
            <person name="Georgii-Hemming P."/>
            <person name="Gingeras T.R."/>
            <person name="Gojobori T."/>
            <person name="Green R.E."/>
            <person name="Gustincich S."/>
            <person name="Harbers M."/>
            <person name="Hayashi Y."/>
            <person name="Hensch T.K."/>
            <person name="Hirokawa N."/>
            <person name="Hill D."/>
            <person name="Huminiecki L."/>
            <person name="Iacono M."/>
            <person name="Ikeo K."/>
            <person name="Iwama A."/>
            <person name="Ishikawa T."/>
            <person name="Jakt M."/>
            <person name="Kanapin A."/>
            <person name="Katoh M."/>
            <person name="Kawasawa Y."/>
            <person name="Kelso J."/>
            <person name="Kitamura H."/>
            <person name="Kitano H."/>
            <person name="Kollias G."/>
            <person name="Krishnan S.P."/>
            <person name="Kruger A."/>
            <person name="Kummerfeld S.K."/>
            <person name="Kurochkin I.V."/>
            <person name="Lareau L.F."/>
            <person name="Lazarevic D."/>
            <person name="Lipovich L."/>
            <person name="Liu J."/>
            <person name="Liuni S."/>
            <person name="McWilliam S."/>
            <person name="Madan Babu M."/>
            <person name="Madera M."/>
            <person name="Marchionni L."/>
            <person name="Matsuda H."/>
            <person name="Matsuzawa S."/>
            <person name="Miki H."/>
            <person name="Mignone F."/>
            <person name="Miyake S."/>
            <person name="Morris K."/>
            <person name="Mottagui-Tabar S."/>
            <person name="Mulder N."/>
            <person name="Nakano N."/>
            <person name="Nakauchi H."/>
            <person name="Ng P."/>
            <person name="Nilsson R."/>
            <person name="Nishiguchi S."/>
            <person name="Nishikawa S."/>
            <person name="Nori F."/>
            <person name="Ohara O."/>
            <person name="Okazaki Y."/>
            <person name="Orlando V."/>
            <person name="Pang K.C."/>
            <person name="Pavan W.J."/>
            <person name="Pavesi G."/>
            <person name="Pesole G."/>
            <person name="Petrovsky N."/>
            <person name="Piazza S."/>
            <person name="Reed J."/>
            <person name="Reid J.F."/>
            <person name="Ring B.Z."/>
            <person name="Ringwald M."/>
            <person name="Rost B."/>
            <person name="Ruan Y."/>
            <person name="Salzberg S.L."/>
            <person name="Sandelin A."/>
            <person name="Schneider C."/>
            <person name="Schoenbach C."/>
            <person name="Sekiguchi K."/>
            <person name="Semple C.A."/>
            <person name="Seno S."/>
            <person name="Sessa L."/>
            <person name="Sheng Y."/>
            <person name="Shibata Y."/>
            <person name="Shimada H."/>
            <person name="Shimada K."/>
            <person name="Silva D."/>
            <person name="Sinclair B."/>
            <person name="Sperling S."/>
            <person name="Stupka E."/>
            <person name="Sugiura K."/>
            <person name="Sultana R."/>
            <person name="Takenaka Y."/>
            <person name="Taki K."/>
            <person name="Tammoja K."/>
            <person name="Tan S.L."/>
            <person name="Tang S."/>
            <person name="Taylor M.S."/>
            <person name="Tegner J."/>
            <person name="Teichmann S.A."/>
            <person name="Ueda H.R."/>
            <person name="van Nimwegen E."/>
            <person name="Verardo R."/>
            <person name="Wei C.L."/>
            <person name="Yagi K."/>
            <person name="Yamanishi H."/>
            <person name="Zabarovsky E."/>
            <person name="Zhu S."/>
            <person name="Zimmer A."/>
            <person name="Hide W."/>
            <person name="Bult C."/>
            <person name="Grimmond S.M."/>
            <person name="Teasdale R.D."/>
            <person name="Liu E.T."/>
            <person name="Brusic V."/>
            <person name="Quackenbush J."/>
            <person name="Wahlestedt C."/>
            <person name="Mattick J.S."/>
            <person name="Hume D.A."/>
            <person name="Kai C."/>
            <person name="Sasaki D."/>
            <person name="Tomaru Y."/>
            <person name="Fukuda S."/>
            <person name="Kanamori-Katayama M."/>
            <person name="Suzuki M."/>
            <person name="Aoki J."/>
            <person name="Arakawa T."/>
            <person name="Iida J."/>
            <person name="Imamura K."/>
            <person name="Itoh M."/>
            <person name="Kato T."/>
            <person name="Kawaji H."/>
            <person name="Kawagashira N."/>
            <person name="Kawashima T."/>
            <person name="Kojima M."/>
            <person name="Kondo S."/>
            <person name="Konno H."/>
            <person name="Nakano K."/>
            <person name="Ninomiya N."/>
            <person name="Nishio T."/>
            <person name="Okada M."/>
            <person name="Plessy C."/>
            <person name="Shibata K."/>
            <person name="Shiraki T."/>
            <person name="Suzuki S."/>
            <person name="Tagami M."/>
            <person name="Waki K."/>
            <person name="Watahiki A."/>
            <person name="Okamura-Oho Y."/>
            <person name="Suzuki H."/>
            <person name="Kawai J."/>
            <person name="Hayashizaki Y."/>
        </authorList>
    </citation>
    <scope>NUCLEOTIDE SEQUENCE [LARGE SCALE MRNA]</scope>
    <source>
        <strain>C57BL/6J</strain>
        <tissue>Cerebellum</tissue>
        <tissue>Liver</tissue>
        <tissue>Small intestine</tissue>
    </source>
</reference>
<reference key="5">
    <citation type="submission" date="2005-07" db="EMBL/GenBank/DDBJ databases">
        <authorList>
            <person name="Mural R.J."/>
            <person name="Adams M.D."/>
            <person name="Myers E.W."/>
            <person name="Smith H.O."/>
            <person name="Venter J.C."/>
        </authorList>
    </citation>
    <scope>NUCLEOTIDE SEQUENCE [LARGE SCALE GENOMIC DNA]</scope>
</reference>
<reference key="6">
    <citation type="journal article" date="2004" name="Genome Res.">
        <title>The status, quality, and expansion of the NIH full-length cDNA project: the Mammalian Gene Collection (MGC).</title>
        <authorList>
            <consortium name="The MGC Project Team"/>
        </authorList>
    </citation>
    <scope>NUCLEOTIDE SEQUENCE [LARGE SCALE MRNA]</scope>
    <source>
        <strain>C57BL/6J</strain>
        <tissue>Mammary gland</tissue>
    </source>
</reference>
<reference key="7">
    <citation type="journal article" date="2010" name="Cell">
        <title>A tissue-specific atlas of mouse protein phosphorylation and expression.</title>
        <authorList>
            <person name="Huttlin E.L."/>
            <person name="Jedrychowski M.P."/>
            <person name="Elias J.E."/>
            <person name="Goswami T."/>
            <person name="Rad R."/>
            <person name="Beausoleil S.A."/>
            <person name="Villen J."/>
            <person name="Haas W."/>
            <person name="Sowa M.E."/>
            <person name="Gygi S.P."/>
        </authorList>
    </citation>
    <scope>PHOSPHORYLATION [LARGE SCALE ANALYSIS] AT SER-103</scope>
    <scope>IDENTIFICATION BY MASS SPECTROMETRY [LARGE SCALE ANALYSIS]</scope>
    <source>
        <tissue>Brain</tissue>
        <tissue>Kidney</tissue>
        <tissue>Liver</tissue>
        <tissue>Lung</tissue>
        <tissue>Pancreas</tissue>
        <tissue>Spleen</tissue>
        <tissue>Testis</tissue>
    </source>
</reference>
<dbReference type="EMBL" id="M27938">
    <property type="protein sequence ID" value="AAA39519.1"/>
    <property type="molecule type" value="mRNA"/>
</dbReference>
<dbReference type="EMBL" id="L10401">
    <property type="protein sequence ID" value="AAA39520.1"/>
    <property type="molecule type" value="mRNA"/>
</dbReference>
<dbReference type="EMBL" id="D17341">
    <property type="protein sequence ID" value="BAA04159.1"/>
    <property type="molecule type" value="mRNA"/>
</dbReference>
<dbReference type="EMBL" id="AB074009">
    <property type="protein sequence ID" value="BAB91440.1"/>
    <property type="molecule type" value="Genomic_DNA"/>
</dbReference>
<dbReference type="EMBL" id="AK005369">
    <property type="protein sequence ID" value="BAB23978.1"/>
    <property type="molecule type" value="mRNA"/>
</dbReference>
<dbReference type="EMBL" id="AK008194">
    <property type="protein sequence ID" value="BAB25525.1"/>
    <property type="molecule type" value="mRNA"/>
</dbReference>
<dbReference type="EMBL" id="AK008305">
    <property type="protein sequence ID" value="BAB25590.1"/>
    <property type="molecule type" value="mRNA"/>
</dbReference>
<dbReference type="EMBL" id="AK010863">
    <property type="protein sequence ID" value="BAB27231.1"/>
    <property type="molecule type" value="mRNA"/>
</dbReference>
<dbReference type="EMBL" id="AK010904">
    <property type="protein sequence ID" value="BAB27257.1"/>
    <property type="molecule type" value="mRNA"/>
</dbReference>
<dbReference type="EMBL" id="AK010962">
    <property type="protein sequence ID" value="BAB27294.1"/>
    <property type="molecule type" value="mRNA"/>
</dbReference>
<dbReference type="EMBL" id="AK012617">
    <property type="protein sequence ID" value="BAB28358.1"/>
    <property type="molecule type" value="mRNA"/>
</dbReference>
<dbReference type="EMBL" id="CH466559">
    <property type="protein sequence ID" value="EDL23523.1"/>
    <property type="molecule type" value="Genomic_DNA"/>
</dbReference>
<dbReference type="EMBL" id="CH466559">
    <property type="protein sequence ID" value="EDL23524.1"/>
    <property type="molecule type" value="Genomic_DNA"/>
</dbReference>
<dbReference type="EMBL" id="CH466559">
    <property type="protein sequence ID" value="EDL23525.1"/>
    <property type="molecule type" value="Genomic_DNA"/>
</dbReference>
<dbReference type="EMBL" id="CH466559">
    <property type="protein sequence ID" value="EDL23526.1"/>
    <property type="molecule type" value="Genomic_DNA"/>
</dbReference>
<dbReference type="EMBL" id="CH466559">
    <property type="protein sequence ID" value="EDL23527.1"/>
    <property type="molecule type" value="Genomic_DNA"/>
</dbReference>
<dbReference type="EMBL" id="CH466559">
    <property type="protein sequence ID" value="EDL23528.1"/>
    <property type="molecule type" value="Genomic_DNA"/>
</dbReference>
<dbReference type="EMBL" id="CH466559">
    <property type="protein sequence ID" value="EDL23529.1"/>
    <property type="molecule type" value="Genomic_DNA"/>
</dbReference>
<dbReference type="EMBL" id="BC013344">
    <property type="protein sequence ID" value="AAH13344.1"/>
    <property type="molecule type" value="mRNA"/>
</dbReference>
<dbReference type="CCDS" id="CCDS28835.1"/>
<dbReference type="PIR" id="B34421">
    <property type="entry name" value="B34421"/>
</dbReference>
<dbReference type="RefSeq" id="NP_001264238.1">
    <property type="nucleotide sequence ID" value="NM_001277309.1"/>
</dbReference>
<dbReference type="RefSeq" id="NP_001264239.1">
    <property type="nucleotide sequence ID" value="NM_001277310.1"/>
</dbReference>
<dbReference type="RefSeq" id="NP_001264240.1">
    <property type="nucleotide sequence ID" value="NM_001277311.1"/>
</dbReference>
<dbReference type="RefSeq" id="NP_001264241.1">
    <property type="nucleotide sequence ID" value="NM_001277312.1"/>
</dbReference>
<dbReference type="RefSeq" id="NP_001400459.1">
    <property type="nucleotide sequence ID" value="NM_001413530.1"/>
</dbReference>
<dbReference type="RefSeq" id="NP_001400460.1">
    <property type="nucleotide sequence ID" value="NM_001413531.1"/>
</dbReference>
<dbReference type="RefSeq" id="NP_034917.1">
    <property type="nucleotide sequence ID" value="NM_010787.2"/>
</dbReference>
<dbReference type="RefSeq" id="XP_006523811.1">
    <property type="nucleotide sequence ID" value="XM_006523748.4"/>
</dbReference>
<dbReference type="RefSeq" id="XP_006523812.1">
    <property type="nucleotide sequence ID" value="XM_006523749.3"/>
</dbReference>
<dbReference type="RefSeq" id="XP_006523813.1">
    <property type="nucleotide sequence ID" value="XM_006523750.5"/>
</dbReference>
<dbReference type="BioGRID" id="201379">
    <property type="interactions" value="6"/>
</dbReference>
<dbReference type="FunCoup" id="Q64327">
    <property type="interactions" value="997"/>
</dbReference>
<dbReference type="STRING" id="10090.ENSMUSP00000156593"/>
<dbReference type="iPTMnet" id="Q64327"/>
<dbReference type="PhosphoSitePlus" id="Q64327"/>
<dbReference type="PaxDb" id="10090-ENSMUSP00000002845"/>
<dbReference type="PeptideAtlas" id="Q64327"/>
<dbReference type="ProteomicsDB" id="295722"/>
<dbReference type="Pumba" id="Q64327"/>
<dbReference type="Antibodypedia" id="16204">
    <property type="antibodies" value="97 antibodies from 21 providers"/>
</dbReference>
<dbReference type="DNASU" id="17256"/>
<dbReference type="Ensembl" id="ENSMUST00000002845.8">
    <property type="protein sequence ID" value="ENSMUSP00000002845.7"/>
    <property type="gene ID" value="ENSMUSG00000002768.9"/>
</dbReference>
<dbReference type="Ensembl" id="ENSMUST00000232732.2">
    <property type="protein sequence ID" value="ENSMUSP00000156392.2"/>
    <property type="gene ID" value="ENSMUSG00000002768.9"/>
</dbReference>
<dbReference type="Ensembl" id="ENSMUST00000232762.2">
    <property type="protein sequence ID" value="ENSMUSP00000156895.2"/>
    <property type="gene ID" value="ENSMUSG00000002768.9"/>
</dbReference>
<dbReference type="Ensembl" id="ENSMUST00000233430.2">
    <property type="protein sequence ID" value="ENSMUSP00000156593.2"/>
    <property type="gene ID" value="ENSMUSG00000002768.9"/>
</dbReference>
<dbReference type="Ensembl" id="ENSMUST00000233491.2">
    <property type="protein sequence ID" value="ENSMUSP00000156439.2"/>
    <property type="gene ID" value="ENSMUSG00000002768.9"/>
</dbReference>
<dbReference type="Ensembl" id="ENSMUST00000233612.2">
    <property type="protein sequence ID" value="ENSMUSP00000156967.2"/>
    <property type="gene ID" value="ENSMUSG00000002768.9"/>
</dbReference>
<dbReference type="GeneID" id="17256"/>
<dbReference type="KEGG" id="mmu:17256"/>
<dbReference type="UCSC" id="uc008cty.2">
    <property type="organism name" value="mouse"/>
</dbReference>
<dbReference type="AGR" id="MGI:96957"/>
<dbReference type="CTD" id="4201"/>
<dbReference type="MGI" id="MGI:96957">
    <property type="gene designation" value="Mea1"/>
</dbReference>
<dbReference type="VEuPathDB" id="HostDB:ENSMUSG00000002768"/>
<dbReference type="eggNOG" id="ENOG502S34Y">
    <property type="taxonomic scope" value="Eukaryota"/>
</dbReference>
<dbReference type="GeneTree" id="ENSGT00390000016927"/>
<dbReference type="HOGENOM" id="CLU_096511_0_0_1"/>
<dbReference type="InParanoid" id="Q64327"/>
<dbReference type="OMA" id="SIPMDPD"/>
<dbReference type="OrthoDB" id="5593200at2759"/>
<dbReference type="PhylomeDB" id="Q64327"/>
<dbReference type="TreeFam" id="TF332365"/>
<dbReference type="BioGRID-ORCS" id="17256">
    <property type="hits" value="2 hits in 77 CRISPR screens"/>
</dbReference>
<dbReference type="ChiTaRS" id="Mea1">
    <property type="organism name" value="mouse"/>
</dbReference>
<dbReference type="PRO" id="PR:Q64327"/>
<dbReference type="Proteomes" id="UP000000589">
    <property type="component" value="Chromosome 17"/>
</dbReference>
<dbReference type="RNAct" id="Q64327">
    <property type="molecule type" value="protein"/>
</dbReference>
<dbReference type="Bgee" id="ENSMUSG00000002768">
    <property type="expression patterns" value="Expressed in seminiferous tubule of testis and 270 other cell types or tissues"/>
</dbReference>
<dbReference type="ExpressionAtlas" id="Q64327">
    <property type="expression patterns" value="baseline and differential"/>
</dbReference>
<dbReference type="GO" id="GO:0005737">
    <property type="term" value="C:cytoplasm"/>
    <property type="evidence" value="ECO:0000314"/>
    <property type="project" value="MGI"/>
</dbReference>
<dbReference type="GO" id="GO:0030154">
    <property type="term" value="P:cell differentiation"/>
    <property type="evidence" value="ECO:0007669"/>
    <property type="project" value="UniProtKB-KW"/>
</dbReference>
<dbReference type="GO" id="GO:0007283">
    <property type="term" value="P:spermatogenesis"/>
    <property type="evidence" value="ECO:0007669"/>
    <property type="project" value="UniProtKB-KW"/>
</dbReference>
<dbReference type="InterPro" id="IPR009685">
    <property type="entry name" value="MEA1"/>
</dbReference>
<dbReference type="PANTHER" id="PTHR17005">
    <property type="entry name" value="MALE-ENHANCED ANTIGEN-1"/>
    <property type="match status" value="1"/>
</dbReference>
<dbReference type="Pfam" id="PF06910">
    <property type="entry name" value="MEA1"/>
    <property type="match status" value="1"/>
</dbReference>